<accession>P84598</accession>
<comment type="function">
    <text evidence="1">Has antimicrobial activity.</text>
</comment>
<comment type="subcellular location">
    <subcellularLocation>
        <location evidence="3">Secreted</location>
    </subcellularLocation>
</comment>
<comment type="tissue specificity">
    <text evidence="3">Expressed by the skin glands.</text>
</comment>
<comment type="mass spectrometry" mass="3352.96" error="0.1" method="MALDI" evidence="3"/>
<comment type="similarity">
    <text evidence="2">Belongs to the frog skin active peptide (FSAP) family. Dermaseptin subfamily.</text>
</comment>
<comment type="online information" name="The antimicrobial peptide database">
    <link uri="https://wangapd3.com/database/query_output.php?ID=0946"/>
</comment>
<proteinExistence type="evidence at protein level"/>
<feature type="peptide" id="PRO_0000248495" description="Dermaseptin-H5" evidence="3">
    <location>
        <begin position="1"/>
        <end position="34"/>
    </location>
</feature>
<organism>
    <name type="scientific">Pithecopus hypochondrialis</name>
    <name type="common">Orange-legged leaf frog</name>
    <name type="synonym">Phyllomedusa hypochondrialis</name>
    <dbReference type="NCBI Taxonomy" id="317381"/>
    <lineage>
        <taxon>Eukaryota</taxon>
        <taxon>Metazoa</taxon>
        <taxon>Chordata</taxon>
        <taxon>Craniata</taxon>
        <taxon>Vertebrata</taxon>
        <taxon>Euteleostomi</taxon>
        <taxon>Amphibia</taxon>
        <taxon>Batrachia</taxon>
        <taxon>Anura</taxon>
        <taxon>Neobatrachia</taxon>
        <taxon>Hyloidea</taxon>
        <taxon>Hylidae</taxon>
        <taxon>Phyllomedusinae</taxon>
        <taxon>Pithecopus</taxon>
    </lineage>
</organism>
<reference key="1">
    <citation type="journal article" date="2006" name="Biochem. Biophys. Res. Commun.">
        <title>Novel dermaseptins from Phyllomedusa hypochondrialis (Amphibia).</title>
        <authorList>
            <person name="Brand G.D."/>
            <person name="Leite J.R.S.A."/>
            <person name="de Sa Mandel S.M."/>
            <person name="Mesquita D.A."/>
            <person name="Silva L.P."/>
            <person name="Prates M.V."/>
            <person name="Barbosa E.A."/>
            <person name="Vinecky F."/>
            <person name="Martins G.R."/>
            <person name="Galasso J.H."/>
            <person name="Kuckelhaus S.A.S."/>
            <person name="Sampaio R.N.R."/>
            <person name="Furtado J.R. Jr."/>
            <person name="Andrade A.C."/>
            <person name="Bloch C. Jr."/>
        </authorList>
    </citation>
    <scope>PROTEIN SEQUENCE</scope>
    <scope>SUBCELLULAR LOCATION</scope>
    <scope>TISSUE SPECIFICITY</scope>
    <scope>MASS SPECTROMETRY</scope>
    <source>
        <tissue>Skin secretion</tissue>
    </source>
</reference>
<reference key="2">
    <citation type="journal article" date="2008" name="Peptides">
        <title>A consistent nomenclature of antimicrobial peptides isolated from frogs of the subfamily Phyllomedusinae.</title>
        <authorList>
            <person name="Amiche M."/>
            <person name="Ladram A."/>
            <person name="Nicolas P."/>
        </authorList>
    </citation>
    <scope>NOMENCLATURE</scope>
</reference>
<dbReference type="GO" id="GO:0005576">
    <property type="term" value="C:extracellular region"/>
    <property type="evidence" value="ECO:0007669"/>
    <property type="project" value="UniProtKB-SubCell"/>
</dbReference>
<dbReference type="GO" id="GO:0006952">
    <property type="term" value="P:defense response"/>
    <property type="evidence" value="ECO:0007669"/>
    <property type="project" value="UniProtKB-KW"/>
</dbReference>
<dbReference type="InterPro" id="IPR022731">
    <property type="entry name" value="Dermaseptin_dom"/>
</dbReference>
<dbReference type="Pfam" id="PF12121">
    <property type="entry name" value="DD_K"/>
    <property type="match status" value="1"/>
</dbReference>
<keyword id="KW-0878">Amphibian defense peptide</keyword>
<keyword id="KW-0929">Antimicrobial</keyword>
<keyword id="KW-0903">Direct protein sequencing</keyword>
<keyword id="KW-0964">Secreted</keyword>
<sequence length="34" mass="3354">ALWKDVLKKIGTVALHAGKAAFGAAADTISQGGS</sequence>
<evidence type="ECO:0000250" key="1">
    <source>
        <dbReference type="UniProtKB" id="P80282"/>
    </source>
</evidence>
<evidence type="ECO:0000255" key="2"/>
<evidence type="ECO:0000269" key="3">
    <source>
    </source>
</evidence>
<evidence type="ECO:0000303" key="4">
    <source>
    </source>
</evidence>
<evidence type="ECO:0000303" key="5">
    <source>
    </source>
</evidence>
<protein>
    <recommendedName>
        <fullName evidence="5">Dermaseptin-H5</fullName>
        <shortName evidence="5">DRS-H5</shortName>
    </recommendedName>
    <alternativeName>
        <fullName evidence="4">DShypo 03</fullName>
    </alternativeName>
</protein>
<name>DRS5_PITHY</name>